<keyword id="KW-0028">Amino-acid biosynthesis</keyword>
<keyword id="KW-0198">Cysteine biosynthesis</keyword>
<keyword id="KW-0249">Electron transport</keyword>
<keyword id="KW-0274">FAD</keyword>
<keyword id="KW-0285">Flavoprotein</keyword>
<keyword id="KW-0288">FMN</keyword>
<keyword id="KW-0521">NADP</keyword>
<keyword id="KW-0560">Oxidoreductase</keyword>
<keyword id="KW-0813">Transport</keyword>
<feature type="chain" id="PRO_0000199942" description="Sulfite reductase [NADPH] flavoprotein alpha-component">
    <location>
        <begin position="1"/>
        <end position="616"/>
    </location>
</feature>
<feature type="domain" description="Flavodoxin-like" evidence="1">
    <location>
        <begin position="80"/>
        <end position="218"/>
    </location>
</feature>
<feature type="domain" description="FAD-binding FR-type" evidence="1">
    <location>
        <begin position="251"/>
        <end position="465"/>
    </location>
</feature>
<feature type="binding site" evidence="1">
    <location>
        <begin position="86"/>
        <end position="91"/>
    </location>
    <ligand>
        <name>FMN</name>
        <dbReference type="ChEBI" id="CHEBI:58210"/>
    </ligand>
</feature>
<feature type="binding site" evidence="1">
    <location>
        <begin position="133"/>
        <end position="136"/>
    </location>
    <ligand>
        <name>FMN</name>
        <dbReference type="ChEBI" id="CHEBI:58210"/>
    </ligand>
</feature>
<feature type="binding site" evidence="1">
    <location>
        <begin position="169"/>
        <end position="178"/>
    </location>
    <ligand>
        <name>FMN</name>
        <dbReference type="ChEBI" id="CHEBI:58210"/>
    </ligand>
</feature>
<feature type="binding site" evidence="1">
    <location>
        <position position="339"/>
    </location>
    <ligand>
        <name>FAD</name>
        <dbReference type="ChEBI" id="CHEBI:57692"/>
    </ligand>
</feature>
<feature type="binding site" evidence="1">
    <location>
        <position position="373"/>
    </location>
    <ligand>
        <name>FAD</name>
        <dbReference type="ChEBI" id="CHEBI:57692"/>
    </ligand>
</feature>
<feature type="binding site" evidence="1">
    <location>
        <begin position="403"/>
        <end position="406"/>
    </location>
    <ligand>
        <name>FAD</name>
        <dbReference type="ChEBI" id="CHEBI:57692"/>
    </ligand>
</feature>
<feature type="binding site" evidence="1">
    <location>
        <begin position="421"/>
        <end position="423"/>
    </location>
    <ligand>
        <name>FAD</name>
        <dbReference type="ChEBI" id="CHEBI:57692"/>
    </ligand>
</feature>
<feature type="binding site" evidence="1">
    <location>
        <position position="427"/>
    </location>
    <ligand>
        <name>FAD</name>
        <dbReference type="ChEBI" id="CHEBI:57692"/>
    </ligand>
</feature>
<feature type="binding site" evidence="1">
    <location>
        <begin position="436"/>
        <end position="439"/>
    </location>
    <ligand>
        <name>FAD</name>
        <dbReference type="ChEBI" id="CHEBI:57692"/>
    </ligand>
</feature>
<feature type="binding site" evidence="1">
    <location>
        <begin position="536"/>
        <end position="537"/>
    </location>
    <ligand>
        <name>NADP(+)</name>
        <dbReference type="ChEBI" id="CHEBI:58349"/>
    </ligand>
</feature>
<feature type="binding site" evidence="1">
    <location>
        <begin position="542"/>
        <end position="546"/>
    </location>
    <ligand>
        <name>NADP(+)</name>
        <dbReference type="ChEBI" id="CHEBI:58349"/>
    </ligand>
</feature>
<feature type="binding site" evidence="1">
    <location>
        <position position="578"/>
    </location>
    <ligand>
        <name>NADP(+)</name>
        <dbReference type="ChEBI" id="CHEBI:58349"/>
    </ligand>
</feature>
<feature type="binding site" evidence="1">
    <location>
        <position position="616"/>
    </location>
    <ligand>
        <name>FAD</name>
        <dbReference type="ChEBI" id="CHEBI:57692"/>
    </ligand>
</feature>
<accession>Q8DCK2</accession>
<gene>
    <name evidence="1" type="primary">cysJ</name>
    <name type="ordered locus">VV1_1402</name>
</gene>
<name>CYSJ_VIBVU</name>
<evidence type="ECO:0000255" key="1">
    <source>
        <dbReference type="HAMAP-Rule" id="MF_01541"/>
    </source>
</evidence>
<evidence type="ECO:0000305" key="2"/>
<proteinExistence type="inferred from homology"/>
<reference key="1">
    <citation type="submission" date="2002-12" db="EMBL/GenBank/DDBJ databases">
        <title>Complete genome sequence of Vibrio vulnificus CMCP6.</title>
        <authorList>
            <person name="Rhee J.H."/>
            <person name="Kim S.Y."/>
            <person name="Chung S.S."/>
            <person name="Kim J.J."/>
            <person name="Moon Y.H."/>
            <person name="Jeong H."/>
            <person name="Choy H.E."/>
        </authorList>
    </citation>
    <scope>NUCLEOTIDE SEQUENCE [LARGE SCALE GENOMIC DNA]</scope>
    <source>
        <strain>CMCP6</strain>
    </source>
</reference>
<comment type="function">
    <text evidence="1">Component of the sulfite reductase complex that catalyzes the 6-electron reduction of sulfite to sulfide. This is one of several activities required for the biosynthesis of L-cysteine from sulfate. The flavoprotein component catalyzes the electron flow from NADPH -&gt; FAD -&gt; FMN to the hemoprotein component.</text>
</comment>
<comment type="catalytic activity">
    <reaction evidence="1">
        <text>hydrogen sulfide + 3 NADP(+) + 3 H2O = sulfite + 3 NADPH + 4 H(+)</text>
        <dbReference type="Rhea" id="RHEA:13801"/>
        <dbReference type="ChEBI" id="CHEBI:15377"/>
        <dbReference type="ChEBI" id="CHEBI:15378"/>
        <dbReference type="ChEBI" id="CHEBI:17359"/>
        <dbReference type="ChEBI" id="CHEBI:29919"/>
        <dbReference type="ChEBI" id="CHEBI:57783"/>
        <dbReference type="ChEBI" id="CHEBI:58349"/>
        <dbReference type="EC" id="1.8.1.2"/>
    </reaction>
</comment>
<comment type="cofactor">
    <cofactor evidence="1">
        <name>FAD</name>
        <dbReference type="ChEBI" id="CHEBI:57692"/>
    </cofactor>
    <text evidence="1">Binds 1 FAD per subunit.</text>
</comment>
<comment type="cofactor">
    <cofactor evidence="1">
        <name>FMN</name>
        <dbReference type="ChEBI" id="CHEBI:58210"/>
    </cofactor>
    <text evidence="1">Binds 1 FMN per subunit.</text>
</comment>
<comment type="pathway">
    <text evidence="1">Sulfur metabolism; hydrogen sulfide biosynthesis; hydrogen sulfide from sulfite (NADPH route): step 1/1.</text>
</comment>
<comment type="subunit">
    <text evidence="1">Alpha(8)-beta(8). The alpha component is a flavoprotein, the beta component is a hemoprotein.</text>
</comment>
<comment type="similarity">
    <text evidence="1">Belongs to the NADPH-dependent sulphite reductase flavoprotein subunit CysJ family.</text>
</comment>
<comment type="similarity">
    <text evidence="1">In the N-terminal section; belongs to the flavodoxin family.</text>
</comment>
<comment type="similarity">
    <text evidence="1">In the C-terminal section; belongs to the flavoprotein pyridine nucleotide cytochrome reductase family.</text>
</comment>
<comment type="sequence caution" evidence="2">
    <conflict type="erroneous initiation">
        <sequence resource="EMBL-CDS" id="AAO09851"/>
    </conflict>
    <text>Extended N-terminus.</text>
</comment>
<sequence>MSSQKKVSSGNTTPSGLAGLASPLNDQQINLLQQISDLSPQQLAWVSGYFWGLSQSAAPSAVTPIAQAVSAVAAKPAGKLTIIFASQTGNAKGVAEALEQEAKAEGIAVQLFDASDYKGKNLANETHVIIVASTNGEGEAPDNAIELHEFLQSKKAPKLPNLQYGVIGLGDSSYEFFCQTGKDFDSYLAKLGATPFIERVDCDVDYDASAAQWRKQALEKVKDALSAGVEADVVQLPVAQLAAGHALYTKQKPYAATLLTSQKITGRDSGKDVRHVEIDLAGSGITYQPGDALGVWFENSGELANQVLAKVGLSGVESVDVDGESLSIHSALVSKFEITSSNPQQVEKFAQLSGSKKLLKLVEEKDKLREYAGNTQLVDLLAEKQTKLTAEELVGLLRRLTPRLYSIASSQTEVDEEVHLTVGLVEYDVKGEKRFGGASGYLAQRLEEGEQVKVFVENNNNFKLPADDNVPVIMVGPGTGIAPFRSFIQERDNRGAEGKNWLFFGDRTFTQDFLYQVEWQKYLKSGLLTKLDVAFSRDQAEKVYVQQRILENAAQVWQWIQEGAYLYVCGDANRMAKDVHQAFVAVAEQEGKMSRDDAEEFINDLRKAKRYQRDVY</sequence>
<protein>
    <recommendedName>
        <fullName evidence="1">Sulfite reductase [NADPH] flavoprotein alpha-component</fullName>
        <shortName evidence="1">SiR-FP</shortName>
        <ecNumber evidence="1">1.8.1.2</ecNumber>
    </recommendedName>
</protein>
<organism>
    <name type="scientific">Vibrio vulnificus (strain CMCP6)</name>
    <dbReference type="NCBI Taxonomy" id="216895"/>
    <lineage>
        <taxon>Bacteria</taxon>
        <taxon>Pseudomonadati</taxon>
        <taxon>Pseudomonadota</taxon>
        <taxon>Gammaproteobacteria</taxon>
        <taxon>Vibrionales</taxon>
        <taxon>Vibrionaceae</taxon>
        <taxon>Vibrio</taxon>
    </lineage>
</organism>
<dbReference type="EC" id="1.8.1.2" evidence="1"/>
<dbReference type="EMBL" id="AE016795">
    <property type="protein sequence ID" value="AAO09851.2"/>
    <property type="status" value="ALT_INIT"/>
    <property type="molecule type" value="Genomic_DNA"/>
</dbReference>
<dbReference type="RefSeq" id="WP_039554818.1">
    <property type="nucleotide sequence ID" value="NC_004459.3"/>
</dbReference>
<dbReference type="SMR" id="Q8DCK2"/>
<dbReference type="KEGG" id="vvu:VV1_1402"/>
<dbReference type="HOGENOM" id="CLU_001570_17_7_6"/>
<dbReference type="UniPathway" id="UPA00140">
    <property type="reaction ID" value="UER00207"/>
</dbReference>
<dbReference type="Proteomes" id="UP000002275">
    <property type="component" value="Chromosome 1"/>
</dbReference>
<dbReference type="GO" id="GO:0005829">
    <property type="term" value="C:cytosol"/>
    <property type="evidence" value="ECO:0007669"/>
    <property type="project" value="TreeGrafter"/>
</dbReference>
<dbReference type="GO" id="GO:0050660">
    <property type="term" value="F:flavin adenine dinucleotide binding"/>
    <property type="evidence" value="ECO:0007669"/>
    <property type="project" value="InterPro"/>
</dbReference>
<dbReference type="GO" id="GO:0010181">
    <property type="term" value="F:FMN binding"/>
    <property type="evidence" value="ECO:0007669"/>
    <property type="project" value="InterPro"/>
</dbReference>
<dbReference type="GO" id="GO:0004783">
    <property type="term" value="F:sulfite reductase (NADPH) activity"/>
    <property type="evidence" value="ECO:0007669"/>
    <property type="project" value="UniProtKB-UniRule"/>
</dbReference>
<dbReference type="GO" id="GO:0019344">
    <property type="term" value="P:cysteine biosynthetic process"/>
    <property type="evidence" value="ECO:0007669"/>
    <property type="project" value="UniProtKB-KW"/>
</dbReference>
<dbReference type="GO" id="GO:0070814">
    <property type="term" value="P:hydrogen sulfide biosynthetic process"/>
    <property type="evidence" value="ECO:0007669"/>
    <property type="project" value="UniProtKB-UniRule"/>
</dbReference>
<dbReference type="GO" id="GO:0000103">
    <property type="term" value="P:sulfate assimilation"/>
    <property type="evidence" value="ECO:0007669"/>
    <property type="project" value="UniProtKB-UniRule"/>
</dbReference>
<dbReference type="CDD" id="cd06199">
    <property type="entry name" value="SiR"/>
    <property type="match status" value="1"/>
</dbReference>
<dbReference type="FunFam" id="3.40.50.80:FF:000001">
    <property type="entry name" value="NADPH--cytochrome P450 reductase 1"/>
    <property type="match status" value="1"/>
</dbReference>
<dbReference type="FunFam" id="3.40.50.360:FF:000018">
    <property type="entry name" value="Sulfite reductase [NADPH] flavoprotein alpha-component"/>
    <property type="match status" value="1"/>
</dbReference>
<dbReference type="Gene3D" id="3.40.50.360">
    <property type="match status" value="1"/>
</dbReference>
<dbReference type="Gene3D" id="1.20.990.10">
    <property type="entry name" value="NADPH-cytochrome p450 Reductase, Chain A, domain 3"/>
    <property type="match status" value="1"/>
</dbReference>
<dbReference type="Gene3D" id="3.40.50.80">
    <property type="entry name" value="Nucleotide-binding domain of ferredoxin-NADP reductase (FNR) module"/>
    <property type="match status" value="1"/>
</dbReference>
<dbReference type="Gene3D" id="2.40.30.10">
    <property type="entry name" value="Translation factors"/>
    <property type="match status" value="1"/>
</dbReference>
<dbReference type="HAMAP" id="MF_01541">
    <property type="entry name" value="CysJ"/>
    <property type="match status" value="1"/>
</dbReference>
<dbReference type="InterPro" id="IPR010199">
    <property type="entry name" value="CysJ"/>
</dbReference>
<dbReference type="InterPro" id="IPR003097">
    <property type="entry name" value="CysJ-like_FAD-binding"/>
</dbReference>
<dbReference type="InterPro" id="IPR029758">
    <property type="entry name" value="CysJ_Proteobact"/>
</dbReference>
<dbReference type="InterPro" id="IPR017927">
    <property type="entry name" value="FAD-bd_FR_type"/>
</dbReference>
<dbReference type="InterPro" id="IPR001094">
    <property type="entry name" value="Flavdoxin-like"/>
</dbReference>
<dbReference type="InterPro" id="IPR008254">
    <property type="entry name" value="Flavodoxin/NO_synth"/>
</dbReference>
<dbReference type="InterPro" id="IPR001709">
    <property type="entry name" value="Flavoprot_Pyr_Nucl_cyt_Rdtase"/>
</dbReference>
<dbReference type="InterPro" id="IPR029039">
    <property type="entry name" value="Flavoprotein-like_sf"/>
</dbReference>
<dbReference type="InterPro" id="IPR039261">
    <property type="entry name" value="FNR_nucleotide-bd"/>
</dbReference>
<dbReference type="InterPro" id="IPR023173">
    <property type="entry name" value="NADPH_Cyt_P450_Rdtase_alpha"/>
</dbReference>
<dbReference type="InterPro" id="IPR001433">
    <property type="entry name" value="OxRdtase_FAD/NAD-bd"/>
</dbReference>
<dbReference type="InterPro" id="IPR017938">
    <property type="entry name" value="Riboflavin_synthase-like_b-brl"/>
</dbReference>
<dbReference type="NCBIfam" id="TIGR01931">
    <property type="entry name" value="cysJ"/>
    <property type="match status" value="1"/>
</dbReference>
<dbReference type="PANTHER" id="PTHR19384:SF128">
    <property type="entry name" value="NADPH OXIDOREDUCTASE A"/>
    <property type="match status" value="1"/>
</dbReference>
<dbReference type="PANTHER" id="PTHR19384">
    <property type="entry name" value="NITRIC OXIDE SYNTHASE-RELATED"/>
    <property type="match status" value="1"/>
</dbReference>
<dbReference type="Pfam" id="PF00667">
    <property type="entry name" value="FAD_binding_1"/>
    <property type="match status" value="1"/>
</dbReference>
<dbReference type="Pfam" id="PF00258">
    <property type="entry name" value="Flavodoxin_1"/>
    <property type="match status" value="1"/>
</dbReference>
<dbReference type="Pfam" id="PF00175">
    <property type="entry name" value="NAD_binding_1"/>
    <property type="match status" value="1"/>
</dbReference>
<dbReference type="PIRSF" id="PIRSF000207">
    <property type="entry name" value="SiR-FP_CysJ"/>
    <property type="match status" value="1"/>
</dbReference>
<dbReference type="PRINTS" id="PR00369">
    <property type="entry name" value="FLAVODOXIN"/>
</dbReference>
<dbReference type="PRINTS" id="PR00371">
    <property type="entry name" value="FPNCR"/>
</dbReference>
<dbReference type="SUPFAM" id="SSF52343">
    <property type="entry name" value="Ferredoxin reductase-like, C-terminal NADP-linked domain"/>
    <property type="match status" value="1"/>
</dbReference>
<dbReference type="SUPFAM" id="SSF52218">
    <property type="entry name" value="Flavoproteins"/>
    <property type="match status" value="1"/>
</dbReference>
<dbReference type="SUPFAM" id="SSF63380">
    <property type="entry name" value="Riboflavin synthase domain-like"/>
    <property type="match status" value="1"/>
</dbReference>
<dbReference type="PROSITE" id="PS51384">
    <property type="entry name" value="FAD_FR"/>
    <property type="match status" value="1"/>
</dbReference>
<dbReference type="PROSITE" id="PS50902">
    <property type="entry name" value="FLAVODOXIN_LIKE"/>
    <property type="match status" value="1"/>
</dbReference>